<evidence type="ECO:0000269" key="1">
    <source>
    </source>
</evidence>
<evidence type="ECO:0000269" key="2">
    <source ref="1"/>
</evidence>
<evidence type="ECO:0000303" key="3">
    <source>
    </source>
</evidence>
<evidence type="ECO:0000303" key="4">
    <source ref="1"/>
</evidence>
<evidence type="ECO:0000305" key="5"/>
<evidence type="ECO:0000305" key="6">
    <source ref="1"/>
</evidence>
<name>CEC_CALVI</name>
<proteinExistence type="evidence at protein level"/>
<organism evidence="4">
    <name type="scientific">Calliphora vicina</name>
    <name type="common">Blue blowfly</name>
    <name type="synonym">Calliphora erythrocephala</name>
    <dbReference type="NCBI Taxonomy" id="7373"/>
    <lineage>
        <taxon>Eukaryota</taxon>
        <taxon>Metazoa</taxon>
        <taxon>Ecdysozoa</taxon>
        <taxon>Arthropoda</taxon>
        <taxon>Hexapoda</taxon>
        <taxon>Insecta</taxon>
        <taxon>Pterygota</taxon>
        <taxon>Neoptera</taxon>
        <taxon>Endopterygota</taxon>
        <taxon>Diptera</taxon>
        <taxon>Brachycera</taxon>
        <taxon>Muscomorpha</taxon>
        <taxon>Oestroidea</taxon>
        <taxon>Calliphoridae</taxon>
        <taxon>Calliphorinae</taxon>
        <taxon>Calliphora</taxon>
    </lineage>
</organism>
<comment type="function">
    <text evidence="1 2">Antibacterial peptide active against Gram-negative bacterium E.coli (PubMed:26177023, Ref.1). Has no activity against Gram-positive bacterium M.luteus (Ref.1). Weakly active against M.luteus (PubMed:26177023).</text>
</comment>
<comment type="subcellular location">
    <subcellularLocation>
        <location evidence="6">Secreted</location>
    </subcellularLocation>
</comment>
<comment type="induction">
    <text evidence="1 2">By bacterial infection.</text>
</comment>
<comment type="mass spectrometry" mass="4156.0" method="MALDI" evidence="2"/>
<comment type="mass spectrometry" mass="4156.0" method="Electrospray" evidence="1"/>
<comment type="similarity">
    <text evidence="5">Belongs to the cecropin family.</text>
</comment>
<accession>C0HJX8</accession>
<reference evidence="5" key="1">
    <citation type="journal article" date="2000" name="Entomol. Sci.">
        <title>Dia pause and immune response: induction of antimicrobial peptides synthesis in the blowfly, Calliphora vicina R.-D. (Diptera: Calliphoridae).</title>
        <authorList>
            <person name="Chernysh S."/>
            <person name="Gordja N.A."/>
            <person name="Simnonenko N.P."/>
        </authorList>
    </citation>
    <scope>PROTEIN SEQUENCE</scope>
    <scope>FUNCTION</scope>
    <scope>INDUCTION</scope>
    <scope>MASS SPECTROMETRY</scope>
    <source>
        <tissue evidence="4">Hemolymph</tissue>
    </source>
</reference>
<reference evidence="5" key="2">
    <citation type="journal article" date="2015" name="PLoS ONE">
        <title>Insect antimicrobial peptide complexes prevent resistance development in bacteria.</title>
        <authorList>
            <person name="Chernysh S."/>
            <person name="Gordya N."/>
            <person name="Suborova T."/>
        </authorList>
    </citation>
    <scope>FUNCTION</scope>
    <scope>INDUCTION</scope>
    <scope>MASS SPECTROMETRY</scope>
    <source>
        <tissue evidence="3">Hemolymph</tissue>
    </source>
</reference>
<dbReference type="SMR" id="C0HJX8"/>
<dbReference type="GO" id="GO:0005615">
    <property type="term" value="C:extracellular space"/>
    <property type="evidence" value="ECO:0007669"/>
    <property type="project" value="TreeGrafter"/>
</dbReference>
<dbReference type="GO" id="GO:0019731">
    <property type="term" value="P:antibacterial humoral response"/>
    <property type="evidence" value="ECO:0007669"/>
    <property type="project" value="InterPro"/>
</dbReference>
<dbReference type="GO" id="GO:0050829">
    <property type="term" value="P:defense response to Gram-negative bacterium"/>
    <property type="evidence" value="ECO:0007669"/>
    <property type="project" value="TreeGrafter"/>
</dbReference>
<dbReference type="GO" id="GO:0050830">
    <property type="term" value="P:defense response to Gram-positive bacterium"/>
    <property type="evidence" value="ECO:0007669"/>
    <property type="project" value="UniProtKB-ARBA"/>
</dbReference>
<dbReference type="GO" id="GO:0045087">
    <property type="term" value="P:innate immune response"/>
    <property type="evidence" value="ECO:0007669"/>
    <property type="project" value="UniProtKB-KW"/>
</dbReference>
<dbReference type="InterPro" id="IPR000875">
    <property type="entry name" value="Cecropin"/>
</dbReference>
<dbReference type="InterPro" id="IPR020400">
    <property type="entry name" value="Cecropin_insect"/>
</dbReference>
<dbReference type="PANTHER" id="PTHR38329">
    <property type="entry name" value="CECROPIN-A1-RELATED"/>
    <property type="match status" value="1"/>
</dbReference>
<dbReference type="PANTHER" id="PTHR38329:SF1">
    <property type="entry name" value="CECROPIN-A1-RELATED"/>
    <property type="match status" value="1"/>
</dbReference>
<dbReference type="Pfam" id="PF00272">
    <property type="entry name" value="Cecropin"/>
    <property type="match status" value="1"/>
</dbReference>
<protein>
    <recommendedName>
        <fullName evidence="4">Cecropin</fullName>
    </recommendedName>
</protein>
<sequence length="39" mass="4085">GWLKKIGKKIGRVGQHTRDATIQGLAVAQQAANVAATAR</sequence>
<keyword id="KW-0044">Antibiotic</keyword>
<keyword id="KW-0929">Antimicrobial</keyword>
<keyword id="KW-0903">Direct protein sequencing</keyword>
<keyword id="KW-0391">Immunity</keyword>
<keyword id="KW-0399">Innate immunity</keyword>
<keyword id="KW-0964">Secreted</keyword>
<feature type="chain" id="PRO_0000435612" description="Cecropin">
    <location>
        <begin position="1"/>
        <end position="39"/>
    </location>
</feature>